<dbReference type="EMBL" id="CP000570">
    <property type="protein sequence ID" value="ABN84571.1"/>
    <property type="molecule type" value="Genomic_DNA"/>
</dbReference>
<dbReference type="RefSeq" id="WP_004194034.1">
    <property type="nucleotide sequence ID" value="NC_009074.1"/>
</dbReference>
<dbReference type="SMR" id="A3ND68"/>
<dbReference type="GeneID" id="92980018"/>
<dbReference type="KEGG" id="bpd:BURPS668_3278"/>
<dbReference type="HOGENOM" id="CLU_005965_2_1_4"/>
<dbReference type="GO" id="GO:0005524">
    <property type="term" value="F:ATP binding"/>
    <property type="evidence" value="ECO:0007669"/>
    <property type="project" value="UniProtKB-UniRule"/>
</dbReference>
<dbReference type="GO" id="GO:0140662">
    <property type="term" value="F:ATP-dependent protein folding chaperone"/>
    <property type="evidence" value="ECO:0007669"/>
    <property type="project" value="InterPro"/>
</dbReference>
<dbReference type="GO" id="GO:0051082">
    <property type="term" value="F:unfolded protein binding"/>
    <property type="evidence" value="ECO:0007669"/>
    <property type="project" value="InterPro"/>
</dbReference>
<dbReference type="CDD" id="cd10234">
    <property type="entry name" value="ASKHA_NBD_HSP70_DnaK-like"/>
    <property type="match status" value="1"/>
</dbReference>
<dbReference type="FunFam" id="2.60.34.10:FF:000014">
    <property type="entry name" value="Chaperone protein DnaK HSP70"/>
    <property type="match status" value="1"/>
</dbReference>
<dbReference type="FunFam" id="1.20.1270.10:FF:000001">
    <property type="entry name" value="Molecular chaperone DnaK"/>
    <property type="match status" value="1"/>
</dbReference>
<dbReference type="FunFam" id="3.30.420.40:FF:000004">
    <property type="entry name" value="Molecular chaperone DnaK"/>
    <property type="match status" value="1"/>
</dbReference>
<dbReference type="FunFam" id="3.90.640.10:FF:000003">
    <property type="entry name" value="Molecular chaperone DnaK"/>
    <property type="match status" value="1"/>
</dbReference>
<dbReference type="Gene3D" id="1.20.1270.10">
    <property type="match status" value="1"/>
</dbReference>
<dbReference type="Gene3D" id="3.30.420.40">
    <property type="match status" value="2"/>
</dbReference>
<dbReference type="Gene3D" id="3.90.640.10">
    <property type="entry name" value="Actin, Chain A, domain 4"/>
    <property type="match status" value="1"/>
</dbReference>
<dbReference type="Gene3D" id="2.60.34.10">
    <property type="entry name" value="Substrate Binding Domain Of DNAk, Chain A, domain 1"/>
    <property type="match status" value="1"/>
</dbReference>
<dbReference type="HAMAP" id="MF_00332">
    <property type="entry name" value="DnaK"/>
    <property type="match status" value="1"/>
</dbReference>
<dbReference type="InterPro" id="IPR043129">
    <property type="entry name" value="ATPase_NBD"/>
</dbReference>
<dbReference type="InterPro" id="IPR012725">
    <property type="entry name" value="Chaperone_DnaK"/>
</dbReference>
<dbReference type="InterPro" id="IPR018181">
    <property type="entry name" value="Heat_shock_70_CS"/>
</dbReference>
<dbReference type="InterPro" id="IPR029048">
    <property type="entry name" value="HSP70_C_sf"/>
</dbReference>
<dbReference type="InterPro" id="IPR029047">
    <property type="entry name" value="HSP70_peptide-bd_sf"/>
</dbReference>
<dbReference type="InterPro" id="IPR013126">
    <property type="entry name" value="Hsp_70_fam"/>
</dbReference>
<dbReference type="NCBIfam" id="NF001413">
    <property type="entry name" value="PRK00290.1"/>
    <property type="match status" value="1"/>
</dbReference>
<dbReference type="NCBIfam" id="NF003520">
    <property type="entry name" value="PRK05183.1"/>
    <property type="match status" value="1"/>
</dbReference>
<dbReference type="NCBIfam" id="TIGR02350">
    <property type="entry name" value="prok_dnaK"/>
    <property type="match status" value="1"/>
</dbReference>
<dbReference type="PANTHER" id="PTHR19375">
    <property type="entry name" value="HEAT SHOCK PROTEIN 70KDA"/>
    <property type="match status" value="1"/>
</dbReference>
<dbReference type="Pfam" id="PF00012">
    <property type="entry name" value="HSP70"/>
    <property type="match status" value="1"/>
</dbReference>
<dbReference type="PRINTS" id="PR00301">
    <property type="entry name" value="HEATSHOCK70"/>
</dbReference>
<dbReference type="SUPFAM" id="SSF53067">
    <property type="entry name" value="Actin-like ATPase domain"/>
    <property type="match status" value="2"/>
</dbReference>
<dbReference type="SUPFAM" id="SSF100934">
    <property type="entry name" value="Heat shock protein 70kD (HSP70), C-terminal subdomain"/>
    <property type="match status" value="1"/>
</dbReference>
<dbReference type="SUPFAM" id="SSF100920">
    <property type="entry name" value="Heat shock protein 70kD (HSP70), peptide-binding domain"/>
    <property type="match status" value="1"/>
</dbReference>
<dbReference type="PROSITE" id="PS00297">
    <property type="entry name" value="HSP70_1"/>
    <property type="match status" value="1"/>
</dbReference>
<dbReference type="PROSITE" id="PS00329">
    <property type="entry name" value="HSP70_2"/>
    <property type="match status" value="1"/>
</dbReference>
<dbReference type="PROSITE" id="PS01036">
    <property type="entry name" value="HSP70_3"/>
    <property type="match status" value="1"/>
</dbReference>
<feature type="chain" id="PRO_1000059524" description="Chaperone protein DnaK">
    <location>
        <begin position="1"/>
        <end position="650"/>
    </location>
</feature>
<feature type="region of interest" description="Disordered" evidence="2">
    <location>
        <begin position="611"/>
        <end position="650"/>
    </location>
</feature>
<feature type="compositionally biased region" description="Low complexity" evidence="2">
    <location>
        <begin position="611"/>
        <end position="636"/>
    </location>
</feature>
<feature type="modified residue" description="Phosphothreonine; by autocatalysis" evidence="1">
    <location>
        <position position="200"/>
    </location>
</feature>
<protein>
    <recommendedName>
        <fullName evidence="1">Chaperone protein DnaK</fullName>
    </recommendedName>
    <alternativeName>
        <fullName evidence="1">HSP70</fullName>
    </alternativeName>
    <alternativeName>
        <fullName evidence="1">Heat shock 70 kDa protein</fullName>
    </alternativeName>
    <alternativeName>
        <fullName evidence="1">Heat shock protein 70</fullName>
    </alternativeName>
</protein>
<sequence length="650" mass="69702">MGKIIGIDLGTTNSCVAIMEGNQVKVIENSEGARTTPSIIAYMDDNEVLVGAPAKRQSVTNPKNTLFAVKRLIGRRFEEKEVQKDIGLMPYAIIKADNGDAWVEAHGEKLAPPQVSAEVLRKMKKTAEDYLGEPVTEAVITVPAYFNDSQRQATKDAGRIAGLEVKRIINEPTAAALAFGLDKAEKGDRKIAVYDLGGGTFDVSIIEIADVDGEMQFEVLSTNGDTFLGGEDFDQRIIDYIIGEFKKEQGVDLSKDVLALQRLKEAAEKAKIELSSSQQTEINLPYITADASGPKHLNLKVTRAKLEALVEDLVERTIEPCRTAIKDAGVKVSDIDDVILVGGQTRMPKVQEKVKEFFGKEPRRDVNPDEAVAVGAAIQGQVLSGDRKDVLLLDVTPLSLGIETLGGVMTKMINKNTTIPTKHAQVYSTADDNQGAVTIKVFQGEREMAAGNKLLGEFNLEGIPPAPRGVPQIEVTFDIDANGILHVGAKDKATGKENKITIKANSGLSEAEIEKMVKDAEANAAEDHKLRELAESRNQGDALVHSTKKALTEYGDKLEAGEKEKIEAALKELEDVLKNASSDKAAIDAKVEAVATASQKLGEKMYADMQAQQAGAAGAAGAAAEGASAQGGAQPADDVVDADFKEVKKD</sequence>
<proteinExistence type="inferred from homology"/>
<evidence type="ECO:0000255" key="1">
    <source>
        <dbReference type="HAMAP-Rule" id="MF_00332"/>
    </source>
</evidence>
<evidence type="ECO:0000256" key="2">
    <source>
        <dbReference type="SAM" id="MobiDB-lite"/>
    </source>
</evidence>
<comment type="function">
    <text evidence="1">Acts as a chaperone.</text>
</comment>
<comment type="induction">
    <text evidence="1">By stress conditions e.g. heat shock.</text>
</comment>
<comment type="similarity">
    <text evidence="1">Belongs to the heat shock protein 70 family.</text>
</comment>
<name>DNAK_BURP6</name>
<reference key="1">
    <citation type="journal article" date="2010" name="Genome Biol. Evol.">
        <title>Continuing evolution of Burkholderia mallei through genome reduction and large-scale rearrangements.</title>
        <authorList>
            <person name="Losada L."/>
            <person name="Ronning C.M."/>
            <person name="DeShazer D."/>
            <person name="Woods D."/>
            <person name="Fedorova N."/>
            <person name="Kim H.S."/>
            <person name="Shabalina S.A."/>
            <person name="Pearson T.R."/>
            <person name="Brinkac L."/>
            <person name="Tan P."/>
            <person name="Nandi T."/>
            <person name="Crabtree J."/>
            <person name="Badger J."/>
            <person name="Beckstrom-Sternberg S."/>
            <person name="Saqib M."/>
            <person name="Schutzer S.E."/>
            <person name="Keim P."/>
            <person name="Nierman W.C."/>
        </authorList>
    </citation>
    <scope>NUCLEOTIDE SEQUENCE [LARGE SCALE GENOMIC DNA]</scope>
    <source>
        <strain>668</strain>
    </source>
</reference>
<accession>A3ND68</accession>
<keyword id="KW-0067">ATP-binding</keyword>
<keyword id="KW-0143">Chaperone</keyword>
<keyword id="KW-0547">Nucleotide-binding</keyword>
<keyword id="KW-0597">Phosphoprotein</keyword>
<keyword id="KW-0346">Stress response</keyword>
<organism>
    <name type="scientific">Burkholderia pseudomallei (strain 668)</name>
    <dbReference type="NCBI Taxonomy" id="320373"/>
    <lineage>
        <taxon>Bacteria</taxon>
        <taxon>Pseudomonadati</taxon>
        <taxon>Pseudomonadota</taxon>
        <taxon>Betaproteobacteria</taxon>
        <taxon>Burkholderiales</taxon>
        <taxon>Burkholderiaceae</taxon>
        <taxon>Burkholderia</taxon>
        <taxon>pseudomallei group</taxon>
    </lineage>
</organism>
<gene>
    <name evidence="1" type="primary">dnaK</name>
    <name type="ordered locus">BURPS668_3278</name>
</gene>